<protein>
    <recommendedName>
        <fullName>COP9 signalosome complex subunit 7</fullName>
        <shortName>CSN complex subunit 7</shortName>
    </recommendedName>
    <alternativeName>
        <fullName>Protein FUSCA 5</fullName>
    </alternativeName>
</protein>
<keyword id="KW-0002">3D-structure</keyword>
<keyword id="KW-0025">Alternative splicing</keyword>
<keyword id="KW-0963">Cytoplasm</keyword>
<keyword id="KW-0217">Developmental protein</keyword>
<keyword id="KW-0539">Nucleus</keyword>
<keyword id="KW-0597">Phosphoprotein</keyword>
<keyword id="KW-0607">Phytochrome signaling pathway</keyword>
<keyword id="KW-1185">Reference proteome</keyword>
<keyword id="KW-0736">Signalosome</keyword>
<gene>
    <name type="primary">CSN7</name>
    <name type="synonym">FUS5</name>
    <name type="ordered locus">At1g02090</name>
    <name type="ORF">T7I23.24</name>
    <name type="ORF">T7I23.25</name>
</gene>
<dbReference type="EMBL" id="AF063852">
    <property type="protein sequence ID" value="AAC25563.1"/>
    <property type="molecule type" value="mRNA"/>
</dbReference>
<dbReference type="EMBL" id="AF395065">
    <property type="protein sequence ID" value="AAL58108.1"/>
    <property type="molecule type" value="mRNA"/>
</dbReference>
<dbReference type="EMBL" id="AF395066">
    <property type="protein sequence ID" value="AAL58109.1"/>
    <property type="molecule type" value="mRNA"/>
</dbReference>
<dbReference type="EMBL" id="U89959">
    <property type="status" value="NOT_ANNOTATED_CDS"/>
    <property type="molecule type" value="Genomic_DNA"/>
</dbReference>
<dbReference type="EMBL" id="CP002684">
    <property type="protein sequence ID" value="AEE27379.1"/>
    <property type="molecule type" value="Genomic_DNA"/>
</dbReference>
<dbReference type="EMBL" id="CP002684">
    <property type="protein sequence ID" value="AEE27380.1"/>
    <property type="molecule type" value="Genomic_DNA"/>
</dbReference>
<dbReference type="EMBL" id="AF372934">
    <property type="protein sequence ID" value="AAK50074.1"/>
    <property type="molecule type" value="mRNA"/>
</dbReference>
<dbReference type="EMBL" id="AY133518">
    <property type="protein sequence ID" value="AAM91348.1"/>
    <property type="molecule type" value="mRNA"/>
</dbReference>
<dbReference type="EMBL" id="AY087971">
    <property type="protein sequence ID" value="AAM65518.1"/>
    <property type="molecule type" value="mRNA"/>
</dbReference>
<dbReference type="PIR" id="T52188">
    <property type="entry name" value="T52188"/>
</dbReference>
<dbReference type="RefSeq" id="NP_563645.1">
    <molecule id="Q94JU3-1"/>
    <property type="nucleotide sequence ID" value="NM_100089.3"/>
</dbReference>
<dbReference type="RefSeq" id="NP_849576.1">
    <molecule id="Q94JU3-2"/>
    <property type="nucleotide sequence ID" value="NM_179245.3"/>
</dbReference>
<dbReference type="PDB" id="3CHM">
    <property type="method" value="X-ray"/>
    <property type="resolution" value="1.50 A"/>
    <property type="chains" value="A=2-169"/>
</dbReference>
<dbReference type="PDBsum" id="3CHM"/>
<dbReference type="SMR" id="Q94JU3"/>
<dbReference type="BioGRID" id="24477">
    <property type="interactions" value="20"/>
</dbReference>
<dbReference type="FunCoup" id="Q94JU3">
    <property type="interactions" value="4136"/>
</dbReference>
<dbReference type="IntAct" id="Q94JU3">
    <property type="interactions" value="10"/>
</dbReference>
<dbReference type="STRING" id="3702.Q94JU3"/>
<dbReference type="iPTMnet" id="Q94JU3"/>
<dbReference type="PaxDb" id="3702-AT1G02090.1"/>
<dbReference type="ProteomicsDB" id="224517">
    <molecule id="Q94JU3-1"/>
</dbReference>
<dbReference type="EnsemblPlants" id="AT1G02090.1">
    <molecule id="Q94JU3-1"/>
    <property type="protein sequence ID" value="AT1G02090.1"/>
    <property type="gene ID" value="AT1G02090"/>
</dbReference>
<dbReference type="EnsemblPlants" id="AT1G02090.2">
    <molecule id="Q94JU3-2"/>
    <property type="protein sequence ID" value="AT1G02090.2"/>
    <property type="gene ID" value="AT1G02090"/>
</dbReference>
<dbReference type="GeneID" id="839241"/>
<dbReference type="Gramene" id="AT1G02090.1">
    <molecule id="Q94JU3-1"/>
    <property type="protein sequence ID" value="AT1G02090.1"/>
    <property type="gene ID" value="AT1G02090"/>
</dbReference>
<dbReference type="Gramene" id="AT1G02090.2">
    <molecule id="Q94JU3-2"/>
    <property type="protein sequence ID" value="AT1G02090.2"/>
    <property type="gene ID" value="AT1G02090"/>
</dbReference>
<dbReference type="KEGG" id="ath:AT1G02090"/>
<dbReference type="Araport" id="AT1G02090"/>
<dbReference type="TAIR" id="AT1G02090">
    <property type="gene designation" value="FUS5"/>
</dbReference>
<dbReference type="eggNOG" id="KOG3250">
    <property type="taxonomic scope" value="Eukaryota"/>
</dbReference>
<dbReference type="InParanoid" id="Q94JU3"/>
<dbReference type="OMA" id="GTYKQFR"/>
<dbReference type="PhylomeDB" id="Q94JU3"/>
<dbReference type="EvolutionaryTrace" id="Q94JU3"/>
<dbReference type="PRO" id="PR:Q94JU3"/>
<dbReference type="Proteomes" id="UP000006548">
    <property type="component" value="Chromosome 1"/>
</dbReference>
<dbReference type="ExpressionAtlas" id="Q94JU3">
    <property type="expression patterns" value="baseline and differential"/>
</dbReference>
<dbReference type="GO" id="GO:0008180">
    <property type="term" value="C:COP9 signalosome"/>
    <property type="evidence" value="ECO:0007669"/>
    <property type="project" value="UniProtKB-KW"/>
</dbReference>
<dbReference type="GO" id="GO:0005737">
    <property type="term" value="C:cytoplasm"/>
    <property type="evidence" value="ECO:0007669"/>
    <property type="project" value="UniProtKB-SubCell"/>
</dbReference>
<dbReference type="GO" id="GO:0010387">
    <property type="term" value="P:COP9 signalosome assembly"/>
    <property type="evidence" value="ECO:0000315"/>
    <property type="project" value="TAIR"/>
</dbReference>
<dbReference type="GO" id="GO:0000338">
    <property type="term" value="P:protein deneddylation"/>
    <property type="evidence" value="ECO:0000315"/>
    <property type="project" value="TAIR"/>
</dbReference>
<dbReference type="GO" id="GO:0009585">
    <property type="term" value="P:red, far-red light phototransduction"/>
    <property type="evidence" value="ECO:0007669"/>
    <property type="project" value="UniProtKB-KW"/>
</dbReference>
<dbReference type="InterPro" id="IPR045237">
    <property type="entry name" value="COPS7/eIF3m"/>
</dbReference>
<dbReference type="InterPro" id="IPR000717">
    <property type="entry name" value="PCI_dom"/>
</dbReference>
<dbReference type="PANTHER" id="PTHR15350:SF5">
    <property type="entry name" value="COP9 SIGNALOSOME COMPLEX SUBUNIT 7"/>
    <property type="match status" value="1"/>
</dbReference>
<dbReference type="PANTHER" id="PTHR15350">
    <property type="entry name" value="COP9 SIGNALOSOME COMPLEX SUBUNIT 7/DENDRITIC CELL PROTEIN GA17"/>
    <property type="match status" value="1"/>
</dbReference>
<dbReference type="Pfam" id="PF01399">
    <property type="entry name" value="PCI"/>
    <property type="match status" value="1"/>
</dbReference>
<dbReference type="SMART" id="SM00088">
    <property type="entry name" value="PINT"/>
    <property type="match status" value="1"/>
</dbReference>
<dbReference type="PROSITE" id="PS50250">
    <property type="entry name" value="PCI"/>
    <property type="match status" value="1"/>
</dbReference>
<reference key="1">
    <citation type="journal article" date="1999" name="Plant Cell">
        <title>Arabidopsis FUSCA5 encodes a novel phosphoprotein that is a component of the COP9 complex.</title>
        <authorList>
            <person name="Karniol B."/>
            <person name="Malec P."/>
            <person name="Chamovitz D.A."/>
        </authorList>
    </citation>
    <scope>NUCLEOTIDE SEQUENCE [MRNA] (ISOFORM 2)</scope>
    <scope>PHOSPHORYLATION</scope>
    <scope>SUBUNIT</scope>
</reference>
<reference key="2">
    <citation type="journal article" date="2001" name="EMBO J.">
        <title>Subunit interaction maps for the regulatory particle of the 26S proteasome and the COP9 signalosome.</title>
        <authorList>
            <person name="Fu H."/>
            <person name="Reis N."/>
            <person name="Lee Y."/>
            <person name="Glickman M.H."/>
            <person name="Vierstra R."/>
        </authorList>
    </citation>
    <scope>NUCLEOTIDE SEQUENCE [MRNA] (ISOFORMS 1 AND 2)</scope>
    <source>
        <strain>cv. Columbia</strain>
    </source>
</reference>
<reference key="3">
    <citation type="journal article" date="2000" name="Nature">
        <title>Sequence and analysis of chromosome 1 of the plant Arabidopsis thaliana.</title>
        <authorList>
            <person name="Theologis A."/>
            <person name="Ecker J.R."/>
            <person name="Palm C.J."/>
            <person name="Federspiel N.A."/>
            <person name="Kaul S."/>
            <person name="White O."/>
            <person name="Alonso J."/>
            <person name="Altafi H."/>
            <person name="Araujo R."/>
            <person name="Bowman C.L."/>
            <person name="Brooks S.Y."/>
            <person name="Buehler E."/>
            <person name="Chan A."/>
            <person name="Chao Q."/>
            <person name="Chen H."/>
            <person name="Cheuk R.F."/>
            <person name="Chin C.W."/>
            <person name="Chung M.K."/>
            <person name="Conn L."/>
            <person name="Conway A.B."/>
            <person name="Conway A.R."/>
            <person name="Creasy T.H."/>
            <person name="Dewar K."/>
            <person name="Dunn P."/>
            <person name="Etgu P."/>
            <person name="Feldblyum T.V."/>
            <person name="Feng J.-D."/>
            <person name="Fong B."/>
            <person name="Fujii C.Y."/>
            <person name="Gill J.E."/>
            <person name="Goldsmith A.D."/>
            <person name="Haas B."/>
            <person name="Hansen N.F."/>
            <person name="Hughes B."/>
            <person name="Huizar L."/>
            <person name="Hunter J.L."/>
            <person name="Jenkins J."/>
            <person name="Johnson-Hopson C."/>
            <person name="Khan S."/>
            <person name="Khaykin E."/>
            <person name="Kim C.J."/>
            <person name="Koo H.L."/>
            <person name="Kremenetskaia I."/>
            <person name="Kurtz D.B."/>
            <person name="Kwan A."/>
            <person name="Lam B."/>
            <person name="Langin-Hooper S."/>
            <person name="Lee A."/>
            <person name="Lee J.M."/>
            <person name="Lenz C.A."/>
            <person name="Li J.H."/>
            <person name="Li Y.-P."/>
            <person name="Lin X."/>
            <person name="Liu S.X."/>
            <person name="Liu Z.A."/>
            <person name="Luros J.S."/>
            <person name="Maiti R."/>
            <person name="Marziali A."/>
            <person name="Militscher J."/>
            <person name="Miranda M."/>
            <person name="Nguyen M."/>
            <person name="Nierman W.C."/>
            <person name="Osborne B.I."/>
            <person name="Pai G."/>
            <person name="Peterson J."/>
            <person name="Pham P.K."/>
            <person name="Rizzo M."/>
            <person name="Rooney T."/>
            <person name="Rowley D."/>
            <person name="Sakano H."/>
            <person name="Salzberg S.L."/>
            <person name="Schwartz J.R."/>
            <person name="Shinn P."/>
            <person name="Southwick A.M."/>
            <person name="Sun H."/>
            <person name="Tallon L.J."/>
            <person name="Tambunga G."/>
            <person name="Toriumi M.J."/>
            <person name="Town C.D."/>
            <person name="Utterback T."/>
            <person name="Van Aken S."/>
            <person name="Vaysberg M."/>
            <person name="Vysotskaia V.S."/>
            <person name="Walker M."/>
            <person name="Wu D."/>
            <person name="Yu G."/>
            <person name="Fraser C.M."/>
            <person name="Venter J.C."/>
            <person name="Davis R.W."/>
        </authorList>
    </citation>
    <scope>NUCLEOTIDE SEQUENCE [LARGE SCALE GENOMIC DNA]</scope>
    <source>
        <strain>cv. Columbia</strain>
    </source>
</reference>
<reference key="4">
    <citation type="journal article" date="2017" name="Plant J.">
        <title>Araport11: a complete reannotation of the Arabidopsis thaliana reference genome.</title>
        <authorList>
            <person name="Cheng C.Y."/>
            <person name="Krishnakumar V."/>
            <person name="Chan A.P."/>
            <person name="Thibaud-Nissen F."/>
            <person name="Schobel S."/>
            <person name="Town C.D."/>
        </authorList>
    </citation>
    <scope>GENOME REANNOTATION</scope>
    <source>
        <strain>cv. Columbia</strain>
    </source>
</reference>
<reference key="5">
    <citation type="journal article" date="2003" name="Science">
        <title>Empirical analysis of transcriptional activity in the Arabidopsis genome.</title>
        <authorList>
            <person name="Yamada K."/>
            <person name="Lim J."/>
            <person name="Dale J.M."/>
            <person name="Chen H."/>
            <person name="Shinn P."/>
            <person name="Palm C.J."/>
            <person name="Southwick A.M."/>
            <person name="Wu H.C."/>
            <person name="Kim C.J."/>
            <person name="Nguyen M."/>
            <person name="Pham P.K."/>
            <person name="Cheuk R.F."/>
            <person name="Karlin-Newmann G."/>
            <person name="Liu S.X."/>
            <person name="Lam B."/>
            <person name="Sakano H."/>
            <person name="Wu T."/>
            <person name="Yu G."/>
            <person name="Miranda M."/>
            <person name="Quach H.L."/>
            <person name="Tripp M."/>
            <person name="Chang C.H."/>
            <person name="Lee J.M."/>
            <person name="Toriumi M.J."/>
            <person name="Chan M.M."/>
            <person name="Tang C.C."/>
            <person name="Onodera C.S."/>
            <person name="Deng J.M."/>
            <person name="Akiyama K."/>
            <person name="Ansari Y."/>
            <person name="Arakawa T."/>
            <person name="Banh J."/>
            <person name="Banno F."/>
            <person name="Bowser L."/>
            <person name="Brooks S.Y."/>
            <person name="Carninci P."/>
            <person name="Chao Q."/>
            <person name="Choy N."/>
            <person name="Enju A."/>
            <person name="Goldsmith A.D."/>
            <person name="Gurjal M."/>
            <person name="Hansen N.F."/>
            <person name="Hayashizaki Y."/>
            <person name="Johnson-Hopson C."/>
            <person name="Hsuan V.W."/>
            <person name="Iida K."/>
            <person name="Karnes M."/>
            <person name="Khan S."/>
            <person name="Koesema E."/>
            <person name="Ishida J."/>
            <person name="Jiang P.X."/>
            <person name="Jones T."/>
            <person name="Kawai J."/>
            <person name="Kamiya A."/>
            <person name="Meyers C."/>
            <person name="Nakajima M."/>
            <person name="Narusaka M."/>
            <person name="Seki M."/>
            <person name="Sakurai T."/>
            <person name="Satou M."/>
            <person name="Tamse R."/>
            <person name="Vaysberg M."/>
            <person name="Wallender E.K."/>
            <person name="Wong C."/>
            <person name="Yamamura Y."/>
            <person name="Yuan S."/>
            <person name="Shinozaki K."/>
            <person name="Davis R.W."/>
            <person name="Theologis A."/>
            <person name="Ecker J.R."/>
        </authorList>
    </citation>
    <scope>NUCLEOTIDE SEQUENCE [LARGE SCALE MRNA] (ISOFORM 1)</scope>
    <source>
        <strain>cv. Columbia</strain>
    </source>
</reference>
<reference key="6">
    <citation type="submission" date="2002-03" db="EMBL/GenBank/DDBJ databases">
        <title>Full-length cDNA from Arabidopsis thaliana.</title>
        <authorList>
            <person name="Brover V.V."/>
            <person name="Troukhan M.E."/>
            <person name="Alexandrov N.A."/>
            <person name="Lu Y.-P."/>
            <person name="Flavell R.B."/>
            <person name="Feldmann K.A."/>
        </authorList>
    </citation>
    <scope>NUCLEOTIDE SEQUENCE [LARGE SCALE MRNA] (ISOFORM 1)</scope>
</reference>
<reference key="7">
    <citation type="journal article" date="2001" name="J. Biol. Chem.">
        <title>Arabidopsis eIF3e (INT-6) associates with both eIF3c and the COP9 signalosome subunit CSN7.</title>
        <authorList>
            <person name="Yahalom A."/>
            <person name="Kim T.-H."/>
            <person name="Winter E."/>
            <person name="Karniol B."/>
            <person name="von Arnim A.G."/>
            <person name="Chamovitz D.A."/>
        </authorList>
    </citation>
    <scope>INTERACTION WITH TIF3E1</scope>
    <scope>SUBCELLULAR LOCATION</scope>
    <source>
        <strain>cv. Columbia</strain>
    </source>
</reference>
<reference key="8">
    <citation type="journal article" date="2001" name="Science">
        <title>Interactions of the COP9 signalosome with the E3 ubiquitin ligase SCF(TIR1) in mediating auxin response.</title>
        <authorList>
            <person name="Schwechheimer C."/>
            <person name="Serino G."/>
            <person name="Callis J."/>
            <person name="Crosby W.L."/>
            <person name="Lyapina S."/>
            <person name="Deshaies R.J."/>
            <person name="Gray W.M."/>
            <person name="Estelle M."/>
            <person name="Deng X.-W."/>
        </authorList>
    </citation>
    <scope>FUNCTION</scope>
</reference>
<reference key="9">
    <citation type="journal article" date="2003" name="Plant Cell">
        <title>Characterization of the last subunit of the Arabidopsis COP9 signalosome: implications for the overall structure and origin of the complex.</title>
        <authorList>
            <person name="Serino G."/>
            <person name="Su H."/>
            <person name="Peng Z."/>
            <person name="Tsuge T."/>
            <person name="Wei N."/>
            <person name="Gu H."/>
            <person name="Deng X.-W."/>
        </authorList>
    </citation>
    <scope>INTERACTION WITH CSN1; CSN4; CSN6 AND CSN8</scope>
</reference>
<reference key="10">
    <citation type="journal article" date="2004" name="Plant Cell">
        <title>Translational regulation via 5' mRNA leader sequences revealed by mutational analysis of the Arabidopsis translation initiation factor subunit eIF3h.</title>
        <authorList>
            <person name="Kim T.-H."/>
            <person name="Kim B.-H."/>
            <person name="Yahalom A."/>
            <person name="Chamovitz D.A."/>
            <person name="von Arnim A.G."/>
        </authorList>
    </citation>
    <scope>INTERACTION WITH TIF3H1</scope>
</reference>
<reference key="11">
    <citation type="journal article" date="2008" name="Plant Signal. Behav.">
        <title>Arabidopsis eIF3e interacts with subunits of the ribosome, Cop9 signalosome and proteasome.</title>
        <authorList>
            <person name="Paz-Aviram T."/>
            <person name="Yahalom A."/>
            <person name="Chamovitz D.A."/>
        </authorList>
    </citation>
    <scope>INTERACTION WITH TIF3E1</scope>
</reference>
<reference key="12">
    <citation type="journal article" date="2011" name="Plant Mol. Biol.">
        <title>COP9 signalosome subunit 7 from Arabidopsis interacts with and regulates the small subunit of ribonucleotide reductase (RNR2).</title>
        <authorList>
            <person name="Halimi Y."/>
            <person name="Dessau M."/>
            <person name="Pollak S."/>
            <person name="Ast T."/>
            <person name="Erez T."/>
            <person name="Livnat-Levanon N."/>
            <person name="Karniol B."/>
            <person name="Hirsch J.A."/>
            <person name="Chamovitz D.A."/>
        </authorList>
    </citation>
    <scope>FUNCTION</scope>
    <scope>INTERACTION WITH TSO2 AND RNR2A</scope>
</reference>
<reference key="13">
    <citation type="journal article" date="2013" name="Proc. Natl. Acad. Sci. U.S.A.">
        <title>Crystal structure and versatile functional roles of the COP9 signalosome subunit 1.</title>
        <authorList>
            <person name="Lee J.H."/>
            <person name="Yi L."/>
            <person name="Li J."/>
            <person name="Schweitzer K."/>
            <person name="Borgmann M."/>
            <person name="Naumann M."/>
            <person name="Wu H."/>
        </authorList>
    </citation>
    <scope>INTERACTION WITH CSN1</scope>
</reference>
<reference key="14">
    <citation type="journal article" date="2008" name="Plant Cell">
        <title>The Arabidopsis COP9 signalosome subunit 7 is a model PCI domain protein with subdomains involved in COP9 signalosome assembly.</title>
        <authorList>
            <person name="Dessau M."/>
            <person name="Halimi Y."/>
            <person name="Erez T."/>
            <person name="Chomsky-Hecht O."/>
            <person name="Chamovitz D.A."/>
            <person name="Hirsch J.A."/>
        </authorList>
    </citation>
    <scope>X-RAY CRYSTALLOGRAPHY (1.50 ANGSTROMS) OF 2-169</scope>
    <scope>MUTAGENESIS OF ASP-12; GLU-44; HIS-71; LYS-144 AND GLU-153</scope>
    <scope>INTERACTION WITH CSN1; CSN6A AND CSN8</scope>
    <scope>FUNCTION</scope>
    <scope>DOMAIN</scope>
</reference>
<proteinExistence type="evidence at protein level"/>
<sequence>MDIEQKQAEIIDQLVKRASTCKSEALGPLIIEATSHPSLFAFSEILALPNVAQLEGTTDSVYLDLLRLFAHGTWGDYKCNATRLPHLSPDQILKLKQLTVLTLAESNKVLPYDTLMVELDVSNVRELEDFLINECMYAGIVRGKLDQLKRCFEVPFAAGRDLRPGQLGNMLHTLSNWLNTSENLLISIQDKIKWADNMSEMDKKHRKEAEEGVEEVKKSLSMKGDVDIRGNKEMFGEPSGVMDYEEDGIRPKRRRHPVTR</sequence>
<feature type="chain" id="PRO_0000121003" description="COP9 signalosome complex subunit 7">
    <location>
        <begin position="1"/>
        <end position="260"/>
    </location>
</feature>
<feature type="domain" description="PCI" evidence="1">
    <location>
        <begin position="1"/>
        <end position="159"/>
    </location>
</feature>
<feature type="region of interest" description="Disordered" evidence="2">
    <location>
        <begin position="228"/>
        <end position="260"/>
    </location>
</feature>
<feature type="compositionally biased region" description="Basic residues" evidence="2">
    <location>
        <begin position="251"/>
        <end position="260"/>
    </location>
</feature>
<feature type="splice variant" id="VSP_011914" description="In isoform 2." evidence="12 13">
    <original>GDVDIRGNKEMFGEPSGVMDYEEDGIRPKRRRHPVTR</original>
    <variation>RE</variation>
    <location>
        <begin position="224"/>
        <end position="260"/>
    </location>
</feature>
<feature type="mutagenesis site" description="No effect on the interaction with CSN8." evidence="8">
    <original>D</original>
    <variation>A</variation>
    <location>
        <position position="12"/>
    </location>
</feature>
<feature type="mutagenesis site" description="Decreased interaction with CSN8. Strongly decreased interaction with CSN8; when associated with A-71." evidence="8">
    <original>E</original>
    <variation>A</variation>
    <location>
        <position position="44"/>
    </location>
</feature>
<feature type="mutagenesis site" description="Decreased interaction with CSN8. Strongly decreased interaction with CSN8; when associated with A-44." evidence="8">
    <original>H</original>
    <variation>A</variation>
    <location>
        <position position="71"/>
    </location>
</feature>
<feature type="mutagenesis site" description="No effect on the interaction with CSN1, but decreased interaction with CSN8." evidence="8">
    <original>K</original>
    <variation>A</variation>
    <location>
        <position position="144"/>
    </location>
</feature>
<feature type="mutagenesis site" description="No effect on the interactions with CSN1 and CSN8." evidence="8">
    <original>E</original>
    <variation>A</variation>
    <location>
        <position position="153"/>
    </location>
</feature>
<feature type="helix" evidence="15">
    <location>
        <begin position="7"/>
        <end position="18"/>
    </location>
</feature>
<feature type="helix" evidence="15">
    <location>
        <begin position="23"/>
        <end position="25"/>
    </location>
</feature>
<feature type="helix" evidence="15">
    <location>
        <begin position="26"/>
        <end position="35"/>
    </location>
</feature>
<feature type="helix" evidence="15">
    <location>
        <begin position="43"/>
        <end position="46"/>
    </location>
</feature>
<feature type="helix" evidence="15">
    <location>
        <begin position="49"/>
        <end position="52"/>
    </location>
</feature>
<feature type="turn" evidence="15">
    <location>
        <begin position="53"/>
        <end position="56"/>
    </location>
</feature>
<feature type="helix" evidence="15">
    <location>
        <begin position="60"/>
        <end position="71"/>
    </location>
</feature>
<feature type="helix" evidence="15">
    <location>
        <begin position="74"/>
        <end position="80"/>
    </location>
</feature>
<feature type="helix" evidence="15">
    <location>
        <begin position="81"/>
        <end position="83"/>
    </location>
</feature>
<feature type="helix" evidence="15">
    <location>
        <begin position="89"/>
        <end position="106"/>
    </location>
</feature>
<feature type="strand" evidence="15">
    <location>
        <begin position="108"/>
        <end position="111"/>
    </location>
</feature>
<feature type="helix" evidence="15">
    <location>
        <begin position="112"/>
        <end position="119"/>
    </location>
</feature>
<feature type="helix" evidence="15">
    <location>
        <begin position="124"/>
        <end position="133"/>
    </location>
</feature>
<feature type="turn" evidence="15">
    <location>
        <begin position="134"/>
        <end position="139"/>
    </location>
</feature>
<feature type="strand" evidence="15">
    <location>
        <begin position="140"/>
        <end position="146"/>
    </location>
</feature>
<feature type="turn" evidence="15">
    <location>
        <begin position="147"/>
        <end position="150"/>
    </location>
</feature>
<feature type="strand" evidence="15">
    <location>
        <begin position="151"/>
        <end position="157"/>
    </location>
</feature>
<comment type="function">
    <text evidence="5 8 10">Component of the COP9 signalosome complex (CSN), a complex involved in various cellular and developmental processes such as photomorphogenesis and auxin and jasmonate responses. The CSN complex is an essential regulator of the ubiquitin (Ubl) conjugation pathway by mediating the deneddylation of the cullin subunits of SCF-type E3 ligase complexes, leading to decrease the Ubl ligase activity of SCF. It is involved in repression of photomorphogenesis in darkness by regulating the activity of COP1-containing Ubl ligase complexes. The complex is also required for degradation of IAA6 by regulating the activity of the Ubl ligase SCF-TIR complex. Regulates the TSO2 subcellular localization. May be involved in nucleic acid binding.</text>
</comment>
<comment type="subunit">
    <text evidence="3 4 6 7 8 9 10 11">Component of the CSN complex, probably composed of CSN1, CSN2, CSN3, CSN4, CSN5 (CSN5A or CSN5B), CSN6 (CSN6A or CSN6B), CSN7 and CSN8. In the CSN complex, it probably interacts directly with CSN4. Interacts (via PCI domain) with CSN1 (via PCI domain) and CSN8 (via PCI domain), and (via C-terminal tail) with CSN6A, TSO2 and RNR2A. Cannot interact simultaneously with CSN1 and CSN8 to form ternary complexes. Also exists as a monomeric form. Binds to the translation initiation factors TIF3E1 and TIF3H1 (PubMed:15548739, PubMed:19704582).</text>
</comment>
<comment type="interaction">
    <interactant intactId="EBI-531152">
        <id>Q94JU3</id>
    </interactant>
    <interactant intactId="EBI-530996">
        <id>P45432</id>
        <label>CSN1</label>
    </interactant>
    <organismsDiffer>false</organismsDiffer>
    <experiments>3</experiments>
</comment>
<comment type="interaction">
    <interactant intactId="EBI-531152">
        <id>Q94JU3</id>
    </interactant>
    <interactant intactId="EBI-531074">
        <id>Q8L5U0</id>
        <label>CSN4</label>
    </interactant>
    <organismsDiffer>false</organismsDiffer>
    <experiments>5</experiments>
</comment>
<comment type="interaction">
    <interactant intactId="EBI-531152">
        <id>Q94JU3</id>
    </interactant>
    <interactant intactId="EBI-530981">
        <id>P43255</id>
        <label>CSN8</label>
    </interactant>
    <organismsDiffer>false</organismsDiffer>
    <experiments>3</experiments>
</comment>
<comment type="interaction">
    <interactant intactId="EBI-531152">
        <id>Q94JU3</id>
    </interactant>
    <interactant intactId="EBI-1635572">
        <id>Q9C5Z3</id>
        <label>TIF3E1</label>
    </interactant>
    <organismsDiffer>false</organismsDiffer>
    <experiments>6</experiments>
</comment>
<comment type="subcellular location">
    <subcellularLocation>
        <location evidence="4">Cytoplasm</location>
    </subcellularLocation>
    <subcellularLocation>
        <location evidence="4">Nucleus</location>
    </subcellularLocation>
</comment>
<comment type="alternative products">
    <event type="alternative splicing"/>
    <isoform>
        <id>Q94JU3-1</id>
        <name>1</name>
        <name>CSN7ii</name>
        <sequence type="displayed"/>
    </isoform>
    <isoform>
        <id>Q94JU3-2</id>
        <name>2</name>
        <name>CSN7i</name>
        <sequence type="described" ref="VSP_011914"/>
    </isoform>
</comment>
<comment type="domain">
    <text evidence="8">The PCI domain is not sufficient to efficiently mediate CSN complex assembly and for biological activity.</text>
</comment>
<comment type="PTM">
    <text evidence="3">Phosphorylated.</text>
</comment>
<comment type="similarity">
    <text evidence="14">Belongs to the CSN7/EIF3M family. CSN7 subfamily.</text>
</comment>
<evidence type="ECO:0000255" key="1">
    <source>
        <dbReference type="PROSITE-ProRule" id="PRU01185"/>
    </source>
</evidence>
<evidence type="ECO:0000256" key="2">
    <source>
        <dbReference type="SAM" id="MobiDB-lite"/>
    </source>
</evidence>
<evidence type="ECO:0000269" key="3">
    <source>
    </source>
</evidence>
<evidence type="ECO:0000269" key="4">
    <source>
    </source>
</evidence>
<evidence type="ECO:0000269" key="5">
    <source>
    </source>
</evidence>
<evidence type="ECO:0000269" key="6">
    <source>
    </source>
</evidence>
<evidence type="ECO:0000269" key="7">
    <source>
    </source>
</evidence>
<evidence type="ECO:0000269" key="8">
    <source>
    </source>
</evidence>
<evidence type="ECO:0000269" key="9">
    <source>
    </source>
</evidence>
<evidence type="ECO:0000269" key="10">
    <source>
    </source>
</evidence>
<evidence type="ECO:0000269" key="11">
    <source>
    </source>
</evidence>
<evidence type="ECO:0000303" key="12">
    <source>
    </source>
</evidence>
<evidence type="ECO:0000303" key="13">
    <source>
    </source>
</evidence>
<evidence type="ECO:0000305" key="14"/>
<evidence type="ECO:0007829" key="15">
    <source>
        <dbReference type="PDB" id="3CHM"/>
    </source>
</evidence>
<organism>
    <name type="scientific">Arabidopsis thaliana</name>
    <name type="common">Mouse-ear cress</name>
    <dbReference type="NCBI Taxonomy" id="3702"/>
    <lineage>
        <taxon>Eukaryota</taxon>
        <taxon>Viridiplantae</taxon>
        <taxon>Streptophyta</taxon>
        <taxon>Embryophyta</taxon>
        <taxon>Tracheophyta</taxon>
        <taxon>Spermatophyta</taxon>
        <taxon>Magnoliopsida</taxon>
        <taxon>eudicotyledons</taxon>
        <taxon>Gunneridae</taxon>
        <taxon>Pentapetalae</taxon>
        <taxon>rosids</taxon>
        <taxon>malvids</taxon>
        <taxon>Brassicales</taxon>
        <taxon>Brassicaceae</taxon>
        <taxon>Camelineae</taxon>
        <taxon>Arabidopsis</taxon>
    </lineage>
</organism>
<accession>Q94JU3</accession>
<accession>O81247</accession>
<name>CSN7_ARATH</name>